<gene>
    <name evidence="1" type="primary">gcvPA</name>
    <name type="ordered locus">FTW_1664</name>
</gene>
<dbReference type="EC" id="1.4.4.2" evidence="1"/>
<dbReference type="EMBL" id="CP000608">
    <property type="protein sequence ID" value="ABO47356.1"/>
    <property type="molecule type" value="Genomic_DNA"/>
</dbReference>
<dbReference type="RefSeq" id="WP_003020123.1">
    <property type="nucleotide sequence ID" value="NC_009257.1"/>
</dbReference>
<dbReference type="SMR" id="A4IZK6"/>
<dbReference type="KEGG" id="ftw:FTW_1664"/>
<dbReference type="HOGENOM" id="CLU_004620_0_2_6"/>
<dbReference type="GO" id="GO:0004375">
    <property type="term" value="F:glycine dehydrogenase (decarboxylating) activity"/>
    <property type="evidence" value="ECO:0007669"/>
    <property type="project" value="UniProtKB-EC"/>
</dbReference>
<dbReference type="GO" id="GO:0019464">
    <property type="term" value="P:glycine decarboxylation via glycine cleavage system"/>
    <property type="evidence" value="ECO:0007669"/>
    <property type="project" value="UniProtKB-UniRule"/>
</dbReference>
<dbReference type="GO" id="GO:0009116">
    <property type="term" value="P:nucleoside metabolic process"/>
    <property type="evidence" value="ECO:0007669"/>
    <property type="project" value="InterPro"/>
</dbReference>
<dbReference type="CDD" id="cd00613">
    <property type="entry name" value="GDC-P"/>
    <property type="match status" value="1"/>
</dbReference>
<dbReference type="Gene3D" id="3.90.1150.10">
    <property type="entry name" value="Aspartate Aminotransferase, domain 1"/>
    <property type="match status" value="1"/>
</dbReference>
<dbReference type="Gene3D" id="3.40.640.10">
    <property type="entry name" value="Type I PLP-dependent aspartate aminotransferase-like (Major domain)"/>
    <property type="match status" value="1"/>
</dbReference>
<dbReference type="HAMAP" id="MF_00712">
    <property type="entry name" value="GcvPA"/>
    <property type="match status" value="1"/>
</dbReference>
<dbReference type="InterPro" id="IPR023010">
    <property type="entry name" value="GcvPA"/>
</dbReference>
<dbReference type="InterPro" id="IPR049315">
    <property type="entry name" value="GDC-P_N"/>
</dbReference>
<dbReference type="InterPro" id="IPR020581">
    <property type="entry name" value="GDC_P"/>
</dbReference>
<dbReference type="InterPro" id="IPR015424">
    <property type="entry name" value="PyrdxlP-dep_Trfase"/>
</dbReference>
<dbReference type="InterPro" id="IPR015421">
    <property type="entry name" value="PyrdxlP-dep_Trfase_major"/>
</dbReference>
<dbReference type="InterPro" id="IPR015422">
    <property type="entry name" value="PyrdxlP-dep_Trfase_small"/>
</dbReference>
<dbReference type="NCBIfam" id="NF001696">
    <property type="entry name" value="PRK00451.1"/>
    <property type="match status" value="1"/>
</dbReference>
<dbReference type="PANTHER" id="PTHR42806">
    <property type="entry name" value="GLYCINE CLEAVAGE SYSTEM P-PROTEIN"/>
    <property type="match status" value="1"/>
</dbReference>
<dbReference type="PANTHER" id="PTHR42806:SF1">
    <property type="entry name" value="GLYCINE DEHYDROGENASE (DECARBOXYLATING)"/>
    <property type="match status" value="1"/>
</dbReference>
<dbReference type="Pfam" id="PF02347">
    <property type="entry name" value="GDC-P"/>
    <property type="match status" value="1"/>
</dbReference>
<dbReference type="PIRSF" id="PIRSF006815">
    <property type="entry name" value="GcvPA"/>
    <property type="match status" value="1"/>
</dbReference>
<dbReference type="SUPFAM" id="SSF53383">
    <property type="entry name" value="PLP-dependent transferases"/>
    <property type="match status" value="1"/>
</dbReference>
<name>GCSPA_FRATW</name>
<reference key="1">
    <citation type="journal article" date="2007" name="PLoS ONE">
        <title>Complete genomic characterization of a pathogenic A.II strain of Francisella tularensis subspecies tularensis.</title>
        <authorList>
            <person name="Beckstrom-Sternberg S.M."/>
            <person name="Auerbach R.K."/>
            <person name="Godbole S."/>
            <person name="Pearson J.V."/>
            <person name="Beckstrom-Sternberg J.S."/>
            <person name="Deng Z."/>
            <person name="Munk C."/>
            <person name="Kubota K."/>
            <person name="Zhou Y."/>
            <person name="Bruce D."/>
            <person name="Noronha J."/>
            <person name="Scheuermann R.H."/>
            <person name="Wang A."/>
            <person name="Wei X."/>
            <person name="Wang J."/>
            <person name="Hao J."/>
            <person name="Wagner D.M."/>
            <person name="Brettin T.S."/>
            <person name="Brown N."/>
            <person name="Gilna P."/>
            <person name="Keim P.S."/>
        </authorList>
    </citation>
    <scope>NUCLEOTIDE SEQUENCE [LARGE SCALE GENOMIC DNA]</scope>
    <source>
        <strain>WY96-3418</strain>
    </source>
</reference>
<sequence length="455" mass="49699">MSFIPHKLEQIKKMLDTIGASSVDQLFDEIPRHLRADTLKIKDGINEIQLANLMRKRANKNHHNINYIGAGAYSHHIPAAIWDIVARGEFYTAYTPYQAEASQGGLQVIYEFQTMMAGLTGMDASNASMYDGATALAESVLMAIRSNKKAKSQKVLIAEALHPTYLRVLETITKHQGIEFDIVNLDSKNGKTDVTKLEDFANTNYAAVVIQSPNFLGQLADVDGITNWAHKHGALVIAVTNPMSLAILKSPAEWGDNGADIVCGEGQPMGVPLASGGPYFGFMTCKMAHVRQMPGRIVGRTVDLDGNEGFCLTLQAREQHIRRAKATSNICTNQGLMVTAATIYMSLLGAEGLERVASISHENTQTLATELAKINGVSIRFNSAFFNEVVIDLPVNAETFVTEMEKEAIDAGYFLGEYHSDLANSIMVCATEIHTSEDIKEYIEATKKVLARIGG</sequence>
<proteinExistence type="inferred from homology"/>
<protein>
    <recommendedName>
        <fullName evidence="1">Probable glycine dehydrogenase (decarboxylating) subunit 1</fullName>
        <ecNumber evidence="1">1.4.4.2</ecNumber>
    </recommendedName>
    <alternativeName>
        <fullName evidence="1">Glycine cleavage system P-protein subunit 1</fullName>
    </alternativeName>
    <alternativeName>
        <fullName evidence="1">Glycine decarboxylase subunit 1</fullName>
    </alternativeName>
    <alternativeName>
        <fullName evidence="1">Glycine dehydrogenase (aminomethyl-transferring) subunit 1</fullName>
    </alternativeName>
</protein>
<keyword id="KW-0560">Oxidoreductase</keyword>
<feature type="chain" id="PRO_1000045655" description="Probable glycine dehydrogenase (decarboxylating) subunit 1">
    <location>
        <begin position="1"/>
        <end position="455"/>
    </location>
</feature>
<comment type="function">
    <text evidence="1">The glycine cleavage system catalyzes the degradation of glycine. The P protein binds the alpha-amino group of glycine through its pyridoxal phosphate cofactor; CO(2) is released and the remaining methylamine moiety is then transferred to the lipoamide cofactor of the H protein.</text>
</comment>
<comment type="catalytic activity">
    <reaction evidence="1">
        <text>N(6)-[(R)-lipoyl]-L-lysyl-[glycine-cleavage complex H protein] + glycine + H(+) = N(6)-[(R)-S(8)-aminomethyldihydrolipoyl]-L-lysyl-[glycine-cleavage complex H protein] + CO2</text>
        <dbReference type="Rhea" id="RHEA:24304"/>
        <dbReference type="Rhea" id="RHEA-COMP:10494"/>
        <dbReference type="Rhea" id="RHEA-COMP:10495"/>
        <dbReference type="ChEBI" id="CHEBI:15378"/>
        <dbReference type="ChEBI" id="CHEBI:16526"/>
        <dbReference type="ChEBI" id="CHEBI:57305"/>
        <dbReference type="ChEBI" id="CHEBI:83099"/>
        <dbReference type="ChEBI" id="CHEBI:83143"/>
        <dbReference type="EC" id="1.4.4.2"/>
    </reaction>
</comment>
<comment type="subunit">
    <text evidence="1">The glycine cleavage system is composed of four proteins: P, T, L and H. In this organism, the P 'protein' is a heterodimer of two subunits.</text>
</comment>
<comment type="similarity">
    <text evidence="1">Belongs to the GcvP family. N-terminal subunit subfamily.</text>
</comment>
<evidence type="ECO:0000255" key="1">
    <source>
        <dbReference type="HAMAP-Rule" id="MF_00712"/>
    </source>
</evidence>
<organism>
    <name type="scientific">Francisella tularensis subsp. tularensis (strain WY96-3418)</name>
    <dbReference type="NCBI Taxonomy" id="418136"/>
    <lineage>
        <taxon>Bacteria</taxon>
        <taxon>Pseudomonadati</taxon>
        <taxon>Pseudomonadota</taxon>
        <taxon>Gammaproteobacteria</taxon>
        <taxon>Thiotrichales</taxon>
        <taxon>Francisellaceae</taxon>
        <taxon>Francisella</taxon>
    </lineage>
</organism>
<accession>A4IZK6</accession>